<feature type="chain" id="PRO_0000347485" description="Alanine--tRNA ligase">
    <location>
        <begin position="1"/>
        <end position="880"/>
    </location>
</feature>
<feature type="region of interest" description="Disordered" evidence="2">
    <location>
        <begin position="414"/>
        <end position="443"/>
    </location>
</feature>
<feature type="binding site" evidence="1">
    <location>
        <position position="566"/>
    </location>
    <ligand>
        <name>Zn(2+)</name>
        <dbReference type="ChEBI" id="CHEBI:29105"/>
    </ligand>
</feature>
<feature type="binding site" evidence="1">
    <location>
        <position position="570"/>
    </location>
    <ligand>
        <name>Zn(2+)</name>
        <dbReference type="ChEBI" id="CHEBI:29105"/>
    </ligand>
</feature>
<feature type="binding site" evidence="1">
    <location>
        <position position="668"/>
    </location>
    <ligand>
        <name>Zn(2+)</name>
        <dbReference type="ChEBI" id="CHEBI:29105"/>
    </ligand>
</feature>
<feature type="binding site" evidence="1">
    <location>
        <position position="672"/>
    </location>
    <ligand>
        <name>Zn(2+)</name>
        <dbReference type="ChEBI" id="CHEBI:29105"/>
    </ligand>
</feature>
<proteinExistence type="inferred from homology"/>
<gene>
    <name evidence="1" type="primary">alaS</name>
    <name type="ordered locus">Amet_2458</name>
</gene>
<comment type="function">
    <text evidence="1">Catalyzes the attachment of alanine to tRNA(Ala) in a two-step reaction: alanine is first activated by ATP to form Ala-AMP and then transferred to the acceptor end of tRNA(Ala). Also edits incorrectly charged Ser-tRNA(Ala) and Gly-tRNA(Ala) via its editing domain.</text>
</comment>
<comment type="catalytic activity">
    <reaction evidence="1">
        <text>tRNA(Ala) + L-alanine + ATP = L-alanyl-tRNA(Ala) + AMP + diphosphate</text>
        <dbReference type="Rhea" id="RHEA:12540"/>
        <dbReference type="Rhea" id="RHEA-COMP:9657"/>
        <dbReference type="Rhea" id="RHEA-COMP:9923"/>
        <dbReference type="ChEBI" id="CHEBI:30616"/>
        <dbReference type="ChEBI" id="CHEBI:33019"/>
        <dbReference type="ChEBI" id="CHEBI:57972"/>
        <dbReference type="ChEBI" id="CHEBI:78442"/>
        <dbReference type="ChEBI" id="CHEBI:78497"/>
        <dbReference type="ChEBI" id="CHEBI:456215"/>
        <dbReference type="EC" id="6.1.1.7"/>
    </reaction>
</comment>
<comment type="cofactor">
    <cofactor evidence="1">
        <name>Zn(2+)</name>
        <dbReference type="ChEBI" id="CHEBI:29105"/>
    </cofactor>
    <text evidence="1">Binds 1 zinc ion per subunit.</text>
</comment>
<comment type="subcellular location">
    <subcellularLocation>
        <location evidence="1">Cytoplasm</location>
    </subcellularLocation>
</comment>
<comment type="domain">
    <text evidence="1">Consists of three domains; the N-terminal catalytic domain, the editing domain and the C-terminal C-Ala domain. The editing domain removes incorrectly charged amino acids, while the C-Ala domain, along with tRNA(Ala), serves as a bridge to cooperatively bring together the editing and aminoacylation centers thus stimulating deacylation of misacylated tRNAs.</text>
</comment>
<comment type="similarity">
    <text evidence="1">Belongs to the class-II aminoacyl-tRNA synthetase family.</text>
</comment>
<comment type="sequence caution" evidence="3">
    <conflict type="erroneous initiation">
        <sequence resource="EMBL-CDS" id="ABR48612"/>
    </conflict>
</comment>
<dbReference type="EC" id="6.1.1.7" evidence="1"/>
<dbReference type="EMBL" id="CP000724">
    <property type="protein sequence ID" value="ABR48612.1"/>
    <property type="status" value="ALT_INIT"/>
    <property type="molecule type" value="Genomic_DNA"/>
</dbReference>
<dbReference type="RefSeq" id="WP_041720751.1">
    <property type="nucleotide sequence ID" value="NC_009633.1"/>
</dbReference>
<dbReference type="SMR" id="A6TQZ4"/>
<dbReference type="STRING" id="293826.Amet_2458"/>
<dbReference type="KEGG" id="amt:Amet_2458"/>
<dbReference type="eggNOG" id="COG0013">
    <property type="taxonomic scope" value="Bacteria"/>
</dbReference>
<dbReference type="HOGENOM" id="CLU_004485_1_1_9"/>
<dbReference type="OrthoDB" id="9803884at2"/>
<dbReference type="Proteomes" id="UP000001572">
    <property type="component" value="Chromosome"/>
</dbReference>
<dbReference type="GO" id="GO:0005829">
    <property type="term" value="C:cytosol"/>
    <property type="evidence" value="ECO:0007669"/>
    <property type="project" value="TreeGrafter"/>
</dbReference>
<dbReference type="GO" id="GO:0004813">
    <property type="term" value="F:alanine-tRNA ligase activity"/>
    <property type="evidence" value="ECO:0007669"/>
    <property type="project" value="UniProtKB-UniRule"/>
</dbReference>
<dbReference type="GO" id="GO:0002161">
    <property type="term" value="F:aminoacyl-tRNA deacylase activity"/>
    <property type="evidence" value="ECO:0007669"/>
    <property type="project" value="TreeGrafter"/>
</dbReference>
<dbReference type="GO" id="GO:0005524">
    <property type="term" value="F:ATP binding"/>
    <property type="evidence" value="ECO:0007669"/>
    <property type="project" value="UniProtKB-UniRule"/>
</dbReference>
<dbReference type="GO" id="GO:0140096">
    <property type="term" value="F:catalytic activity, acting on a protein"/>
    <property type="evidence" value="ECO:0007669"/>
    <property type="project" value="UniProtKB-ARBA"/>
</dbReference>
<dbReference type="GO" id="GO:0016740">
    <property type="term" value="F:transferase activity"/>
    <property type="evidence" value="ECO:0007669"/>
    <property type="project" value="UniProtKB-ARBA"/>
</dbReference>
<dbReference type="GO" id="GO:0000049">
    <property type="term" value="F:tRNA binding"/>
    <property type="evidence" value="ECO:0007669"/>
    <property type="project" value="UniProtKB-KW"/>
</dbReference>
<dbReference type="GO" id="GO:0008270">
    <property type="term" value="F:zinc ion binding"/>
    <property type="evidence" value="ECO:0007669"/>
    <property type="project" value="UniProtKB-UniRule"/>
</dbReference>
<dbReference type="GO" id="GO:0006419">
    <property type="term" value="P:alanyl-tRNA aminoacylation"/>
    <property type="evidence" value="ECO:0007669"/>
    <property type="project" value="UniProtKB-UniRule"/>
</dbReference>
<dbReference type="CDD" id="cd00673">
    <property type="entry name" value="AlaRS_core"/>
    <property type="match status" value="1"/>
</dbReference>
<dbReference type="FunFam" id="2.40.30.130:FF:000001">
    <property type="entry name" value="Alanine--tRNA ligase"/>
    <property type="match status" value="1"/>
</dbReference>
<dbReference type="FunFam" id="3.10.310.40:FF:000001">
    <property type="entry name" value="Alanine--tRNA ligase"/>
    <property type="match status" value="1"/>
</dbReference>
<dbReference type="FunFam" id="3.30.54.20:FF:000001">
    <property type="entry name" value="Alanine--tRNA ligase"/>
    <property type="match status" value="1"/>
</dbReference>
<dbReference type="FunFam" id="3.30.930.10:FF:000004">
    <property type="entry name" value="Alanine--tRNA ligase"/>
    <property type="match status" value="1"/>
</dbReference>
<dbReference type="FunFam" id="3.30.980.10:FF:000004">
    <property type="entry name" value="Alanine--tRNA ligase, cytoplasmic"/>
    <property type="match status" value="1"/>
</dbReference>
<dbReference type="Gene3D" id="2.40.30.130">
    <property type="match status" value="1"/>
</dbReference>
<dbReference type="Gene3D" id="3.10.310.40">
    <property type="match status" value="1"/>
</dbReference>
<dbReference type="Gene3D" id="3.30.54.20">
    <property type="match status" value="1"/>
</dbReference>
<dbReference type="Gene3D" id="6.10.250.550">
    <property type="match status" value="1"/>
</dbReference>
<dbReference type="Gene3D" id="3.30.930.10">
    <property type="entry name" value="Bira Bifunctional Protein, Domain 2"/>
    <property type="match status" value="1"/>
</dbReference>
<dbReference type="Gene3D" id="3.30.980.10">
    <property type="entry name" value="Threonyl-trna Synthetase, Chain A, domain 2"/>
    <property type="match status" value="1"/>
</dbReference>
<dbReference type="HAMAP" id="MF_00036_B">
    <property type="entry name" value="Ala_tRNA_synth_B"/>
    <property type="match status" value="1"/>
</dbReference>
<dbReference type="InterPro" id="IPR045864">
    <property type="entry name" value="aa-tRNA-synth_II/BPL/LPL"/>
</dbReference>
<dbReference type="InterPro" id="IPR002318">
    <property type="entry name" value="Ala-tRNA-lgiase_IIc"/>
</dbReference>
<dbReference type="InterPro" id="IPR018162">
    <property type="entry name" value="Ala-tRNA-ligase_IIc_anticod-bd"/>
</dbReference>
<dbReference type="InterPro" id="IPR018165">
    <property type="entry name" value="Ala-tRNA-synth_IIc_core"/>
</dbReference>
<dbReference type="InterPro" id="IPR018164">
    <property type="entry name" value="Ala-tRNA-synth_IIc_N"/>
</dbReference>
<dbReference type="InterPro" id="IPR050058">
    <property type="entry name" value="Ala-tRNA_ligase"/>
</dbReference>
<dbReference type="InterPro" id="IPR023033">
    <property type="entry name" value="Ala_tRNA_ligase_euk/bac"/>
</dbReference>
<dbReference type="InterPro" id="IPR003156">
    <property type="entry name" value="DHHA1_dom"/>
</dbReference>
<dbReference type="InterPro" id="IPR018163">
    <property type="entry name" value="Thr/Ala-tRNA-synth_IIc_edit"/>
</dbReference>
<dbReference type="InterPro" id="IPR009000">
    <property type="entry name" value="Transl_B-barrel_sf"/>
</dbReference>
<dbReference type="InterPro" id="IPR012947">
    <property type="entry name" value="tRNA_SAD"/>
</dbReference>
<dbReference type="NCBIfam" id="TIGR00344">
    <property type="entry name" value="alaS"/>
    <property type="match status" value="1"/>
</dbReference>
<dbReference type="PANTHER" id="PTHR11777:SF9">
    <property type="entry name" value="ALANINE--TRNA LIGASE, CYTOPLASMIC"/>
    <property type="match status" value="1"/>
</dbReference>
<dbReference type="PANTHER" id="PTHR11777">
    <property type="entry name" value="ALANYL-TRNA SYNTHETASE"/>
    <property type="match status" value="1"/>
</dbReference>
<dbReference type="Pfam" id="PF02272">
    <property type="entry name" value="DHHA1"/>
    <property type="match status" value="1"/>
</dbReference>
<dbReference type="Pfam" id="PF01411">
    <property type="entry name" value="tRNA-synt_2c"/>
    <property type="match status" value="1"/>
</dbReference>
<dbReference type="Pfam" id="PF07973">
    <property type="entry name" value="tRNA_SAD"/>
    <property type="match status" value="1"/>
</dbReference>
<dbReference type="PRINTS" id="PR00980">
    <property type="entry name" value="TRNASYNTHALA"/>
</dbReference>
<dbReference type="SMART" id="SM00863">
    <property type="entry name" value="tRNA_SAD"/>
    <property type="match status" value="1"/>
</dbReference>
<dbReference type="SUPFAM" id="SSF55681">
    <property type="entry name" value="Class II aaRS and biotin synthetases"/>
    <property type="match status" value="1"/>
</dbReference>
<dbReference type="SUPFAM" id="SSF101353">
    <property type="entry name" value="Putative anticodon-binding domain of alanyl-tRNA synthetase (AlaRS)"/>
    <property type="match status" value="1"/>
</dbReference>
<dbReference type="SUPFAM" id="SSF55186">
    <property type="entry name" value="ThrRS/AlaRS common domain"/>
    <property type="match status" value="1"/>
</dbReference>
<dbReference type="SUPFAM" id="SSF50447">
    <property type="entry name" value="Translation proteins"/>
    <property type="match status" value="1"/>
</dbReference>
<dbReference type="PROSITE" id="PS50860">
    <property type="entry name" value="AA_TRNA_LIGASE_II_ALA"/>
    <property type="match status" value="1"/>
</dbReference>
<accession>A6TQZ4</accession>
<evidence type="ECO:0000255" key="1">
    <source>
        <dbReference type="HAMAP-Rule" id="MF_00036"/>
    </source>
</evidence>
<evidence type="ECO:0000256" key="2">
    <source>
        <dbReference type="SAM" id="MobiDB-lite"/>
    </source>
</evidence>
<evidence type="ECO:0000305" key="3"/>
<organism>
    <name type="scientific">Alkaliphilus metalliredigens (strain QYMF)</name>
    <dbReference type="NCBI Taxonomy" id="293826"/>
    <lineage>
        <taxon>Bacteria</taxon>
        <taxon>Bacillati</taxon>
        <taxon>Bacillota</taxon>
        <taxon>Clostridia</taxon>
        <taxon>Peptostreptococcales</taxon>
        <taxon>Natronincolaceae</taxon>
        <taxon>Alkaliphilus</taxon>
    </lineage>
</organism>
<keyword id="KW-0030">Aminoacyl-tRNA synthetase</keyword>
<keyword id="KW-0067">ATP-binding</keyword>
<keyword id="KW-0963">Cytoplasm</keyword>
<keyword id="KW-0436">Ligase</keyword>
<keyword id="KW-0479">Metal-binding</keyword>
<keyword id="KW-0547">Nucleotide-binding</keyword>
<keyword id="KW-0648">Protein biosynthesis</keyword>
<keyword id="KW-1185">Reference proteome</keyword>
<keyword id="KW-0694">RNA-binding</keyword>
<keyword id="KW-0820">tRNA-binding</keyword>
<keyword id="KW-0862">Zinc</keyword>
<name>SYA_ALKMQ</name>
<reference key="1">
    <citation type="journal article" date="2016" name="Genome Announc.">
        <title>Complete genome sequence of Alkaliphilus metalliredigens strain QYMF, an alkaliphilic and metal-reducing bacterium isolated from borax-contaminated leachate ponds.</title>
        <authorList>
            <person name="Hwang C."/>
            <person name="Copeland A."/>
            <person name="Lucas S."/>
            <person name="Lapidus A."/>
            <person name="Barry K."/>
            <person name="Detter J.C."/>
            <person name="Glavina Del Rio T."/>
            <person name="Hammon N."/>
            <person name="Israni S."/>
            <person name="Dalin E."/>
            <person name="Tice H."/>
            <person name="Pitluck S."/>
            <person name="Chertkov O."/>
            <person name="Brettin T."/>
            <person name="Bruce D."/>
            <person name="Han C."/>
            <person name="Schmutz J."/>
            <person name="Larimer F."/>
            <person name="Land M.L."/>
            <person name="Hauser L."/>
            <person name="Kyrpides N."/>
            <person name="Mikhailova N."/>
            <person name="Ye Q."/>
            <person name="Zhou J."/>
            <person name="Richardson P."/>
            <person name="Fields M.W."/>
        </authorList>
    </citation>
    <scope>NUCLEOTIDE SEQUENCE [LARGE SCALE GENOMIC DNA]</scope>
    <source>
        <strain>QYMF</strain>
    </source>
</reference>
<protein>
    <recommendedName>
        <fullName evidence="1">Alanine--tRNA ligase</fullName>
        <ecNumber evidence="1">6.1.1.7</ecNumber>
    </recommendedName>
    <alternativeName>
        <fullName evidence="1">Alanyl-tRNA synthetase</fullName>
        <shortName evidence="1">AlaRS</shortName>
    </alternativeName>
</protein>
<sequence>MKKMGLNEIRKLFLDFYEEKEHYVQSSYPLVPHNDKSLLLINAGMAPLKNYFSGVETPPSKRMATCQKCIRTGDIENVGKTSRHATFFEMLGSFAFGDYFKTESIQWGWEFATKYLEMPEDKIWASVYEEDDEAYGIWENQIKMPKERIVRLGKEDNFWEIGVGPCGPCSELYFDRGDKYSCGHDDCKPGCDCDRFVEFWNHVFTQFDKDEAGNYNLLPNPNIDTGMGLERVACIMQDVDSIFEVDTMKHILNSVCTATNTQYNKDVKTNISLRIITDHLRSITFMIGDGILPSNEGRGYVLRRLLRRAARHGKLLGVSKSFLYELMDTVTETYGGAYSELVEKKDYIKKIIQVEEDRFQETIHQGLEILNQHIEEMIGKSENMLNGTYAFKLYDTYGFPLDLTKEILEEREMTVDESEFESEMEKQRNRARKARSGGDTEGWKEDAFDALDKNIQTSFKGYETLRAEGKVLAIIEENQSVNLTSAGKEVVIVLDKTPFYPESGGQIGDIGHIFKDEFEGQVLDTKQGKNQRIHQYIKILRGILQVGDSIQGEVDKEPRHNTERNHTATHLLHKALKGIIGEHVEQAGSLVTPEKLRFDFSHFEGLSSADLSKVELEVNQEILNALNVDTVEASLEEAKKMGAMALFGEKYGDDVRVVKTGDYSVELCGGTHVKNSSEIGTFLILSETGVAAGVRRIEAVTGQEAYHHIKREQGLIQDIESLLKTKGEQLTKRVEELLKETKEKDKELQQLKSKLANQSIDEILNQIEVIEGTNLLVHHFGEQSMEDLRNIGDSLKQKIGSGVIALGAESNDKASFFVTATKDVVEKGVHSGNMIREVAKIAGGGGGGRPDMAQAGGKNPEKIQSALSIVKGLLKNQLNG</sequence>